<evidence type="ECO:0000255" key="1">
    <source>
        <dbReference type="HAMAP-Rule" id="MF_03013"/>
    </source>
</evidence>
<evidence type="ECO:0000255" key="2">
    <source>
        <dbReference type="PROSITE-ProRule" id="PRU01167"/>
    </source>
</evidence>
<evidence type="ECO:0000256" key="3">
    <source>
        <dbReference type="SAM" id="MobiDB-lite"/>
    </source>
</evidence>
<organism>
    <name type="scientific">Caenorhabditis briggsae</name>
    <dbReference type="NCBI Taxonomy" id="6238"/>
    <lineage>
        <taxon>Eukaryota</taxon>
        <taxon>Metazoa</taxon>
        <taxon>Ecdysozoa</taxon>
        <taxon>Nematoda</taxon>
        <taxon>Chromadorea</taxon>
        <taxon>Rhabditida</taxon>
        <taxon>Rhabditina</taxon>
        <taxon>Rhabditomorpha</taxon>
        <taxon>Rhabditoidea</taxon>
        <taxon>Rhabditidae</taxon>
        <taxon>Peloderinae</taxon>
        <taxon>Caenorhabditis</taxon>
    </lineage>
</organism>
<reference key="1">
    <citation type="journal article" date="2003" name="PLoS Biol.">
        <title>The genome sequence of Caenorhabditis briggsae: a platform for comparative genomics.</title>
        <authorList>
            <person name="Stein L.D."/>
            <person name="Bao Z."/>
            <person name="Blasiar D."/>
            <person name="Blumenthal T."/>
            <person name="Brent M.R."/>
            <person name="Chen N."/>
            <person name="Chinwalla A."/>
            <person name="Clarke L."/>
            <person name="Clee C."/>
            <person name="Coghlan A."/>
            <person name="Coulson A."/>
            <person name="D'Eustachio P."/>
            <person name="Fitch D.H.A."/>
            <person name="Fulton L.A."/>
            <person name="Fulton R.E."/>
            <person name="Griffiths-Jones S."/>
            <person name="Harris T.W."/>
            <person name="Hillier L.W."/>
            <person name="Kamath R."/>
            <person name="Kuwabara P.E."/>
            <person name="Mardis E.R."/>
            <person name="Marra M.A."/>
            <person name="Miner T.L."/>
            <person name="Minx P."/>
            <person name="Mullikin J.C."/>
            <person name="Plumb R.W."/>
            <person name="Rogers J."/>
            <person name="Schein J.E."/>
            <person name="Sohrmann M."/>
            <person name="Spieth J."/>
            <person name="Stajich J.E."/>
            <person name="Wei C."/>
            <person name="Willey D."/>
            <person name="Wilson R.K."/>
            <person name="Durbin R.M."/>
            <person name="Waterston R.H."/>
        </authorList>
    </citation>
    <scope>NUCLEOTIDE SEQUENCE [LARGE SCALE GENOMIC DNA]</scope>
    <source>
        <strain>AF16</strain>
    </source>
</reference>
<dbReference type="EMBL" id="HE601459">
    <property type="protein sequence ID" value="CAP29577.2"/>
    <property type="molecule type" value="Genomic_DNA"/>
</dbReference>
<dbReference type="SMR" id="A8XAA9"/>
<dbReference type="FunCoup" id="A8XAA9">
    <property type="interactions" value="2426"/>
</dbReference>
<dbReference type="STRING" id="6238.A8XAA9"/>
<dbReference type="WormBase" id="CBG10067">
    <property type="protein sequence ID" value="CBP02460"/>
    <property type="gene ID" value="WBGene00031546"/>
    <property type="gene designation" value="Cbr-clu-1"/>
</dbReference>
<dbReference type="eggNOG" id="KOG1839">
    <property type="taxonomic scope" value="Eukaryota"/>
</dbReference>
<dbReference type="HOGENOM" id="CLU_003256_1_0_1"/>
<dbReference type="InParanoid" id="A8XAA9"/>
<dbReference type="OMA" id="DMAQCMR"/>
<dbReference type="Proteomes" id="UP000008549">
    <property type="component" value="Unassembled WGS sequence"/>
</dbReference>
<dbReference type="GO" id="GO:0005737">
    <property type="term" value="C:cytoplasm"/>
    <property type="evidence" value="ECO:0000318"/>
    <property type="project" value="GO_Central"/>
</dbReference>
<dbReference type="GO" id="GO:0003729">
    <property type="term" value="F:mRNA binding"/>
    <property type="evidence" value="ECO:0000318"/>
    <property type="project" value="GO_Central"/>
</dbReference>
<dbReference type="GO" id="GO:0048312">
    <property type="term" value="P:intracellular distribution of mitochondria"/>
    <property type="evidence" value="ECO:0000318"/>
    <property type="project" value="GO_Central"/>
</dbReference>
<dbReference type="GO" id="GO:0007005">
    <property type="term" value="P:mitochondrion organization"/>
    <property type="evidence" value="ECO:0007669"/>
    <property type="project" value="UniProtKB-UniRule"/>
</dbReference>
<dbReference type="CDD" id="cd15466">
    <property type="entry name" value="CLU-central"/>
    <property type="match status" value="1"/>
</dbReference>
<dbReference type="FunFam" id="1.25.40.10:FF:001515">
    <property type="entry name" value="Clustered mitochondria protein homolog"/>
    <property type="match status" value="1"/>
</dbReference>
<dbReference type="FunFam" id="3.30.2280.10:FF:000002">
    <property type="entry name" value="Clustered mitochondria protein homolog"/>
    <property type="match status" value="1"/>
</dbReference>
<dbReference type="Gene3D" id="3.30.2280.10">
    <property type="entry name" value="Hypothetical protein (hspc210)"/>
    <property type="match status" value="1"/>
</dbReference>
<dbReference type="Gene3D" id="1.25.40.10">
    <property type="entry name" value="Tetratricopeptide repeat domain"/>
    <property type="match status" value="2"/>
</dbReference>
<dbReference type="HAMAP" id="MF_03013">
    <property type="entry name" value="CLU"/>
    <property type="match status" value="1"/>
</dbReference>
<dbReference type="InterPro" id="IPR033646">
    <property type="entry name" value="CLU-central"/>
</dbReference>
<dbReference type="InterPro" id="IPR025697">
    <property type="entry name" value="CLU_dom"/>
</dbReference>
<dbReference type="InterPro" id="IPR028275">
    <property type="entry name" value="CLU_N"/>
</dbReference>
<dbReference type="InterPro" id="IPR027523">
    <property type="entry name" value="CLU_prot"/>
</dbReference>
<dbReference type="InterPro" id="IPR007967">
    <property type="entry name" value="GSKIP_dom"/>
</dbReference>
<dbReference type="InterPro" id="IPR023231">
    <property type="entry name" value="GSKIP_dom_sf"/>
</dbReference>
<dbReference type="InterPro" id="IPR011990">
    <property type="entry name" value="TPR-like_helical_dom_sf"/>
</dbReference>
<dbReference type="PANTHER" id="PTHR12601:SF6">
    <property type="entry name" value="CLUSTERED MITOCHONDRIA PROTEIN HOMOLOG"/>
    <property type="match status" value="1"/>
</dbReference>
<dbReference type="PANTHER" id="PTHR12601">
    <property type="entry name" value="EUKARYOTIC TRANSLATION INITIATION FACTOR 3 SUBUNIT EIF-3"/>
    <property type="match status" value="1"/>
</dbReference>
<dbReference type="Pfam" id="PF13236">
    <property type="entry name" value="CLU"/>
    <property type="match status" value="1"/>
</dbReference>
<dbReference type="Pfam" id="PF15044">
    <property type="entry name" value="CLU_N"/>
    <property type="match status" value="1"/>
</dbReference>
<dbReference type="Pfam" id="PF12807">
    <property type="entry name" value="eIF3_p135"/>
    <property type="match status" value="1"/>
</dbReference>
<dbReference type="Pfam" id="PF05303">
    <property type="entry name" value="GSKIP_dom"/>
    <property type="match status" value="1"/>
</dbReference>
<dbReference type="Pfam" id="PF13424">
    <property type="entry name" value="TPR_12"/>
    <property type="match status" value="1"/>
</dbReference>
<dbReference type="SUPFAM" id="SSF103107">
    <property type="entry name" value="Hypothetical protein c14orf129, hspc210"/>
    <property type="match status" value="1"/>
</dbReference>
<dbReference type="SUPFAM" id="SSF48452">
    <property type="entry name" value="TPR-like"/>
    <property type="match status" value="1"/>
</dbReference>
<dbReference type="PROSITE" id="PS51823">
    <property type="entry name" value="CLU"/>
    <property type="match status" value="1"/>
</dbReference>
<sequence length="1262" mass="141688">MTSGSELKAEVDAPVVNGKDELVHEEDNNDSGHSSINTPDASEDKQTDKLVKVTIQPSCGEAFDLHLSDNELVQELYQTLLDREATCHRTCFSLYLNGTAVDNYSEVRSVPGFIDGCTLNVVDEPYTVRDARLHLRQVRELLRFGLVQDQHEPPCGNEAQSYLASIDLNPSEKKESKQSDILPPDYVLPGCKERSLAHLVVPQQKELIAVKDIAFSPFNPPPGPRKLRGDVLYIDVTTVENRVYHLTCCTRGFYVNNSQEQKFDPTISNANKTIYQSVIELLQNVSPGFKKVYPQILKRRVEKSLVERLPTSYPVSTWVASPLKPDNYSSDSLRAIELIEPFRVGFEDHMPGLLRDWNEELQTTFEMPRKSLAERAVRDRSYYKIHADYVNAAAKGVQSILDGNILAINPGEDKKTHMYIWNNIFFSLGFDVRDHYKELGGDAAAFAATSTDLQGVRAFATLEDPKLNTLGMAIFDYRGYRVTAQSIIPGILEREQEQSVVYGSIDFGKTVVSDEKYHALLEDAAQQLKMLPHNVISVKDGVEQELKLFTSYEAKGIVGNDGRKYVLDLLRSMPPDVHYLEDAEVSETAKDLGYPRKFPHKLSALRRELVDQFCESRLVMFIQSTARKIRALITEAKEKNDEELIKQAAEAESELSLVFVAVSEDREIETKNKIVQDAIKEACAEIHSIYEDRFVIKFNPDCFSPNVKHAPSENLERQRRVVIDAAEYLLTNQIPEIVQSFKDCTVQPIDGNNLADILHSKGINIRYLGEIGKRVQDTNSFARPLVLSDIVARSAKHVIRKINVQTPVDQLVVSTSHILNCLFSTVSEPSPVASHAHKKSSKKNGKKKNSGVWATLTTASLWKSICEESAYYYGYHIDTETLDKFLEQHEIQKTALFRRVVKIMGVQIVARDYQLDSSAKKVAAFTEDDIINFYPIIKHHQPFTVDAKKMIIRGQHAMSLGASREAYECISEAINIMTAVYGVMHPDMPQCLRALARLGHVLGETPDALNHQHKATVMSERLIGLDSGNTIIEYNSLIHYLLICFQINLAHFAFGALLIPGSLRPLYRARYLMNLVFGEKHPIMAQIDANIGTILFTIQEYDTALKYLQSADAISKAIGEPRKLKTGLISNLIARTHAARGDFRAALVAEKETSSIYTELYGKNHQRVKDSGEYLRTLTQQAVTFQKKMLNPDNNTNINELFQIQPPPISALFDILNIINGIMIIGIPGLSNLAALEKEQIGTAEESKATDVAAQLDNETLD</sequence>
<proteinExistence type="inferred from homology"/>
<comment type="function">
    <text evidence="1">mRNA-binding protein involved in proper cytoplasmic distribution of mitochondria.</text>
</comment>
<comment type="subcellular location">
    <subcellularLocation>
        <location evidence="1">Cytoplasm</location>
    </subcellularLocation>
</comment>
<comment type="similarity">
    <text evidence="1">Belongs to the CLU family.</text>
</comment>
<keyword id="KW-0963">Cytoplasm</keyword>
<keyword id="KW-1185">Reference proteome</keyword>
<name>CLU_CAEBR</name>
<protein>
    <recommendedName>
        <fullName evidence="1">Clustered mitochondria protein homolog</fullName>
    </recommendedName>
</protein>
<gene>
    <name evidence="1" type="primary">clu-1</name>
    <name type="ORF">CBG10067</name>
</gene>
<accession>A8XAA9</accession>
<feature type="chain" id="PRO_0000366390" description="Clustered mitochondria protein homolog">
    <location>
        <begin position="1"/>
        <end position="1262"/>
    </location>
</feature>
<feature type="domain" description="Clu" evidence="2">
    <location>
        <begin position="335"/>
        <end position="580"/>
    </location>
</feature>
<feature type="region of interest" description="Disordered" evidence="3">
    <location>
        <begin position="1"/>
        <end position="47"/>
    </location>
</feature>
<feature type="compositionally biased region" description="Polar residues" evidence="3">
    <location>
        <begin position="31"/>
        <end position="40"/>
    </location>
</feature>